<evidence type="ECO:0000255" key="1">
    <source>
        <dbReference type="HAMAP-Rule" id="MF_00188"/>
    </source>
</evidence>
<sequence length="282" mass="30792">MEQIKTFILMTFLALIFMFFGGLIGGEQGVIIAFVVALGMNFFSYFFSDKLVLKHYHAVKVDENSAGGLYAIVRRLANAANVPMPSVYIIPEQIPNAFATGRNPNNAAVAVTEGLLNLLSENEIEGVLAHEMSHVRHYDILIGSVAAVFAGAIAILANFAKFGAVFGGNENNRQNGILMIVAAIIMPIAAAIIQMAISRSREYKADAGAANLTKHPEWLISALSKLENYAQNRTMQNATPQSAHMFIINPFSGVKSSFSQLFRTHPSTKDRIARLNEIKQSM</sequence>
<protein>
    <recommendedName>
        <fullName evidence="1">Protease HtpX homolog</fullName>
        <ecNumber evidence="1">3.4.24.-</ecNumber>
    </recommendedName>
</protein>
<name>HTPX_CAMHC</name>
<reference key="1">
    <citation type="submission" date="2007-07" db="EMBL/GenBank/DDBJ databases">
        <title>Complete genome sequence of Campylobacter hominis ATCC BAA-381, a commensal isolated from the human gastrointestinal tract.</title>
        <authorList>
            <person name="Fouts D.E."/>
            <person name="Mongodin E.F."/>
            <person name="Puiu D."/>
            <person name="Sebastian Y."/>
            <person name="Miller W.G."/>
            <person name="Mandrell R.E."/>
            <person name="Nelson K.E."/>
        </authorList>
    </citation>
    <scope>NUCLEOTIDE SEQUENCE [LARGE SCALE GENOMIC DNA]</scope>
    <source>
        <strain>ATCC BAA-381 / DSM 21671 / CCUG 45161 / LMG 19568 / NCTC 13146 / CH001A</strain>
    </source>
</reference>
<gene>
    <name evidence="1" type="primary">htpX</name>
    <name type="ordered locus">CHAB381_0401</name>
</gene>
<accession>A7I0F9</accession>
<proteinExistence type="inferred from homology"/>
<keyword id="KW-0997">Cell inner membrane</keyword>
<keyword id="KW-1003">Cell membrane</keyword>
<keyword id="KW-0378">Hydrolase</keyword>
<keyword id="KW-0472">Membrane</keyword>
<keyword id="KW-0479">Metal-binding</keyword>
<keyword id="KW-0482">Metalloprotease</keyword>
<keyword id="KW-0645">Protease</keyword>
<keyword id="KW-1185">Reference proteome</keyword>
<keyword id="KW-0812">Transmembrane</keyword>
<keyword id="KW-1133">Transmembrane helix</keyword>
<keyword id="KW-0862">Zinc</keyword>
<dbReference type="EC" id="3.4.24.-" evidence="1"/>
<dbReference type="EMBL" id="CP000776">
    <property type="protein sequence ID" value="ABS51651.1"/>
    <property type="molecule type" value="Genomic_DNA"/>
</dbReference>
<dbReference type="RefSeq" id="WP_012108283.1">
    <property type="nucleotide sequence ID" value="NC_009714.1"/>
</dbReference>
<dbReference type="SMR" id="A7I0F9"/>
<dbReference type="STRING" id="360107.CHAB381_0401"/>
<dbReference type="KEGG" id="cha:CHAB381_0401"/>
<dbReference type="eggNOG" id="COG0501">
    <property type="taxonomic scope" value="Bacteria"/>
</dbReference>
<dbReference type="HOGENOM" id="CLU_042266_3_0_7"/>
<dbReference type="OrthoDB" id="15218at2"/>
<dbReference type="Proteomes" id="UP000002407">
    <property type="component" value="Chromosome"/>
</dbReference>
<dbReference type="GO" id="GO:0005886">
    <property type="term" value="C:plasma membrane"/>
    <property type="evidence" value="ECO:0007669"/>
    <property type="project" value="UniProtKB-SubCell"/>
</dbReference>
<dbReference type="GO" id="GO:0004222">
    <property type="term" value="F:metalloendopeptidase activity"/>
    <property type="evidence" value="ECO:0007669"/>
    <property type="project" value="UniProtKB-UniRule"/>
</dbReference>
<dbReference type="GO" id="GO:0008270">
    <property type="term" value="F:zinc ion binding"/>
    <property type="evidence" value="ECO:0007669"/>
    <property type="project" value="UniProtKB-UniRule"/>
</dbReference>
<dbReference type="GO" id="GO:0006508">
    <property type="term" value="P:proteolysis"/>
    <property type="evidence" value="ECO:0007669"/>
    <property type="project" value="UniProtKB-KW"/>
</dbReference>
<dbReference type="CDD" id="cd07336">
    <property type="entry name" value="M48B_HtpX_like"/>
    <property type="match status" value="1"/>
</dbReference>
<dbReference type="Gene3D" id="3.30.2010.10">
    <property type="entry name" value="Metalloproteases ('zincins'), catalytic domain"/>
    <property type="match status" value="1"/>
</dbReference>
<dbReference type="HAMAP" id="MF_00188">
    <property type="entry name" value="Pept_M48_protease_HtpX"/>
    <property type="match status" value="1"/>
</dbReference>
<dbReference type="InterPro" id="IPR050083">
    <property type="entry name" value="HtpX_protease"/>
</dbReference>
<dbReference type="InterPro" id="IPR022919">
    <property type="entry name" value="Pept_M48_protease_HtpX"/>
</dbReference>
<dbReference type="InterPro" id="IPR001915">
    <property type="entry name" value="Peptidase_M48"/>
</dbReference>
<dbReference type="NCBIfam" id="NF002826">
    <property type="entry name" value="PRK03001.1"/>
    <property type="match status" value="1"/>
</dbReference>
<dbReference type="PANTHER" id="PTHR43221">
    <property type="entry name" value="PROTEASE HTPX"/>
    <property type="match status" value="1"/>
</dbReference>
<dbReference type="PANTHER" id="PTHR43221:SF1">
    <property type="entry name" value="PROTEASE HTPX"/>
    <property type="match status" value="1"/>
</dbReference>
<dbReference type="Pfam" id="PF01435">
    <property type="entry name" value="Peptidase_M48"/>
    <property type="match status" value="1"/>
</dbReference>
<comment type="cofactor">
    <cofactor evidence="1">
        <name>Zn(2+)</name>
        <dbReference type="ChEBI" id="CHEBI:29105"/>
    </cofactor>
    <text evidence="1">Binds 1 zinc ion per subunit.</text>
</comment>
<comment type="subcellular location">
    <subcellularLocation>
        <location evidence="1">Cell inner membrane</location>
        <topology evidence="1">Multi-pass membrane protein</topology>
    </subcellularLocation>
</comment>
<comment type="similarity">
    <text evidence="1">Belongs to the peptidase M48B family.</text>
</comment>
<feature type="chain" id="PRO_1000020857" description="Protease HtpX homolog">
    <location>
        <begin position="1"/>
        <end position="282"/>
    </location>
</feature>
<feature type="transmembrane region" description="Helical" evidence="1">
    <location>
        <begin position="6"/>
        <end position="26"/>
    </location>
</feature>
<feature type="transmembrane region" description="Helical" evidence="1">
    <location>
        <begin position="28"/>
        <end position="48"/>
    </location>
</feature>
<feature type="transmembrane region" description="Helical" evidence="1">
    <location>
        <begin position="140"/>
        <end position="160"/>
    </location>
</feature>
<feature type="transmembrane region" description="Helical" evidence="1">
    <location>
        <begin position="177"/>
        <end position="197"/>
    </location>
</feature>
<feature type="active site" evidence="1">
    <location>
        <position position="131"/>
    </location>
</feature>
<feature type="binding site" evidence="1">
    <location>
        <position position="130"/>
    </location>
    <ligand>
        <name>Zn(2+)</name>
        <dbReference type="ChEBI" id="CHEBI:29105"/>
        <note>catalytic</note>
    </ligand>
</feature>
<feature type="binding site" evidence="1">
    <location>
        <position position="134"/>
    </location>
    <ligand>
        <name>Zn(2+)</name>
        <dbReference type="ChEBI" id="CHEBI:29105"/>
        <note>catalytic</note>
    </ligand>
</feature>
<feature type="binding site" evidence="1">
    <location>
        <position position="202"/>
    </location>
    <ligand>
        <name>Zn(2+)</name>
        <dbReference type="ChEBI" id="CHEBI:29105"/>
        <note>catalytic</note>
    </ligand>
</feature>
<organism>
    <name type="scientific">Campylobacter hominis (strain ATCC BAA-381 / DSM 21671 / CCUG 45161 / LMG 19568 / NCTC 13146 / CH001A)</name>
    <dbReference type="NCBI Taxonomy" id="360107"/>
    <lineage>
        <taxon>Bacteria</taxon>
        <taxon>Pseudomonadati</taxon>
        <taxon>Campylobacterota</taxon>
        <taxon>Epsilonproteobacteria</taxon>
        <taxon>Campylobacterales</taxon>
        <taxon>Campylobacteraceae</taxon>
        <taxon>Campylobacter</taxon>
    </lineage>
</organism>